<name>ARI3A_DANRE</name>
<sequence length="570" mass="62395">MVDNTSIATKSALQAAFSSASSLPLLVSSPGAHGQSGGGGGMKLEAVMENLQRQQAARLALEEKLRQAEKEKDIRSMVESQIQQQALAFRHYQAAVRGAFAAGVPNSSSGHPLERRAESDIDDEDDEDDDPELDRGMDDEERDMDEDDSMNEGGGDEDLEGPLAHYPPRHAVYPGAGQSPKSTPIHLSRVQPPYPAPRQAESPSALAPQAQSQHHEWTYEEQFKQLYELDDDEKRKEFLDDLFSFMQKRGTPVNRIPIMAKQVLDLYTLYKLVTEKGGLVEVINKKIWREITKGLNLPTSITSAAFTLRTQYMKYLYPYECEKRGLSSPGELQAAIDSNRREGRRQSYGSTLFNYSPVGTPTLLASPKLQMPHISMPTPNGGHMTQTPGIKKEDSMLSSCLTNRVGIPMSLAGHHSAAQAAAAAAVQAAALEQLREKLESGEPPEKKVMLMAEEQQRIMQHALQQNLFAMATQLPMNIKLNNRDDRQETALNLSTNGISSINMSIEINGVVYTGVLFARKPAIGFMPSSQRVHHQHSSQGKSNSPGLSSHIQPSSSASSSASSHGPATSP</sequence>
<keyword id="KW-0963">Cytoplasm</keyword>
<keyword id="KW-0238">DNA-binding</keyword>
<keyword id="KW-0539">Nucleus</keyword>
<keyword id="KW-0597">Phosphoprotein</keyword>
<keyword id="KW-1185">Reference proteome</keyword>
<keyword id="KW-0804">Transcription</keyword>
<keyword id="KW-0805">Transcription regulation</keyword>
<comment type="function">
    <text evidence="1">Transcription factor.</text>
</comment>
<comment type="subunit">
    <text evidence="1">Homodimer.</text>
</comment>
<comment type="subcellular location">
    <subcellularLocation>
        <location evidence="2">Nucleus</location>
    </subcellularLocation>
    <subcellularLocation>
        <location evidence="1">Cytoplasm</location>
    </subcellularLocation>
    <text evidence="1">Shuttles between nucleus and cytoplasm.</text>
</comment>
<protein>
    <recommendedName>
        <fullName>AT-rich interactive domain-containing protein 3A</fullName>
        <shortName>ARID domain-containing protein 3A</shortName>
    </recommendedName>
    <alternativeName>
        <fullName>Bright homolog</fullName>
    </alternativeName>
</protein>
<organism>
    <name type="scientific">Danio rerio</name>
    <name type="common">Zebrafish</name>
    <name type="synonym">Brachydanio rerio</name>
    <dbReference type="NCBI Taxonomy" id="7955"/>
    <lineage>
        <taxon>Eukaryota</taxon>
        <taxon>Metazoa</taxon>
        <taxon>Chordata</taxon>
        <taxon>Craniata</taxon>
        <taxon>Vertebrata</taxon>
        <taxon>Euteleostomi</taxon>
        <taxon>Actinopterygii</taxon>
        <taxon>Neopterygii</taxon>
        <taxon>Teleostei</taxon>
        <taxon>Ostariophysi</taxon>
        <taxon>Cypriniformes</taxon>
        <taxon>Danionidae</taxon>
        <taxon>Danioninae</taxon>
        <taxon>Danio</taxon>
    </lineage>
</organism>
<proteinExistence type="evidence at protein level"/>
<reference key="1">
    <citation type="journal article" date="2013" name="Nature">
        <title>The zebrafish reference genome sequence and its relationship to the human genome.</title>
        <authorList>
            <person name="Howe K."/>
            <person name="Clark M.D."/>
            <person name="Torroja C.F."/>
            <person name="Torrance J."/>
            <person name="Berthelot C."/>
            <person name="Muffato M."/>
            <person name="Collins J.E."/>
            <person name="Humphray S."/>
            <person name="McLaren K."/>
            <person name="Matthews L."/>
            <person name="McLaren S."/>
            <person name="Sealy I."/>
            <person name="Caccamo M."/>
            <person name="Churcher C."/>
            <person name="Scott C."/>
            <person name="Barrett J.C."/>
            <person name="Koch R."/>
            <person name="Rauch G.J."/>
            <person name="White S."/>
            <person name="Chow W."/>
            <person name="Kilian B."/>
            <person name="Quintais L.T."/>
            <person name="Guerra-Assuncao J.A."/>
            <person name="Zhou Y."/>
            <person name="Gu Y."/>
            <person name="Yen J."/>
            <person name="Vogel J.H."/>
            <person name="Eyre T."/>
            <person name="Redmond S."/>
            <person name="Banerjee R."/>
            <person name="Chi J."/>
            <person name="Fu B."/>
            <person name="Langley E."/>
            <person name="Maguire S.F."/>
            <person name="Laird G.K."/>
            <person name="Lloyd D."/>
            <person name="Kenyon E."/>
            <person name="Donaldson S."/>
            <person name="Sehra H."/>
            <person name="Almeida-King J."/>
            <person name="Loveland J."/>
            <person name="Trevanion S."/>
            <person name="Jones M."/>
            <person name="Quail M."/>
            <person name="Willey D."/>
            <person name="Hunt A."/>
            <person name="Burton J."/>
            <person name="Sims S."/>
            <person name="McLay K."/>
            <person name="Plumb B."/>
            <person name="Davis J."/>
            <person name="Clee C."/>
            <person name="Oliver K."/>
            <person name="Clark R."/>
            <person name="Riddle C."/>
            <person name="Elliot D."/>
            <person name="Threadgold G."/>
            <person name="Harden G."/>
            <person name="Ware D."/>
            <person name="Begum S."/>
            <person name="Mortimore B."/>
            <person name="Kerry G."/>
            <person name="Heath P."/>
            <person name="Phillimore B."/>
            <person name="Tracey A."/>
            <person name="Corby N."/>
            <person name="Dunn M."/>
            <person name="Johnson C."/>
            <person name="Wood J."/>
            <person name="Clark S."/>
            <person name="Pelan S."/>
            <person name="Griffiths G."/>
            <person name="Smith M."/>
            <person name="Glithero R."/>
            <person name="Howden P."/>
            <person name="Barker N."/>
            <person name="Lloyd C."/>
            <person name="Stevens C."/>
            <person name="Harley J."/>
            <person name="Holt K."/>
            <person name="Panagiotidis G."/>
            <person name="Lovell J."/>
            <person name="Beasley H."/>
            <person name="Henderson C."/>
            <person name="Gordon D."/>
            <person name="Auger K."/>
            <person name="Wright D."/>
            <person name="Collins J."/>
            <person name="Raisen C."/>
            <person name="Dyer L."/>
            <person name="Leung K."/>
            <person name="Robertson L."/>
            <person name="Ambridge K."/>
            <person name="Leongamornlert D."/>
            <person name="McGuire S."/>
            <person name="Gilderthorp R."/>
            <person name="Griffiths C."/>
            <person name="Manthravadi D."/>
            <person name="Nichol S."/>
            <person name="Barker G."/>
            <person name="Whitehead S."/>
            <person name="Kay M."/>
            <person name="Brown J."/>
            <person name="Murnane C."/>
            <person name="Gray E."/>
            <person name="Humphries M."/>
            <person name="Sycamore N."/>
            <person name="Barker D."/>
            <person name="Saunders D."/>
            <person name="Wallis J."/>
            <person name="Babbage A."/>
            <person name="Hammond S."/>
            <person name="Mashreghi-Mohammadi M."/>
            <person name="Barr L."/>
            <person name="Martin S."/>
            <person name="Wray P."/>
            <person name="Ellington A."/>
            <person name="Matthews N."/>
            <person name="Ellwood M."/>
            <person name="Woodmansey R."/>
            <person name="Clark G."/>
            <person name="Cooper J."/>
            <person name="Tromans A."/>
            <person name="Grafham D."/>
            <person name="Skuce C."/>
            <person name="Pandian R."/>
            <person name="Andrews R."/>
            <person name="Harrison E."/>
            <person name="Kimberley A."/>
            <person name="Garnett J."/>
            <person name="Fosker N."/>
            <person name="Hall R."/>
            <person name="Garner P."/>
            <person name="Kelly D."/>
            <person name="Bird C."/>
            <person name="Palmer S."/>
            <person name="Gehring I."/>
            <person name="Berger A."/>
            <person name="Dooley C.M."/>
            <person name="Ersan-Urun Z."/>
            <person name="Eser C."/>
            <person name="Geiger H."/>
            <person name="Geisler M."/>
            <person name="Karotki L."/>
            <person name="Kirn A."/>
            <person name="Konantz J."/>
            <person name="Konantz M."/>
            <person name="Oberlander M."/>
            <person name="Rudolph-Geiger S."/>
            <person name="Teucke M."/>
            <person name="Lanz C."/>
            <person name="Raddatz G."/>
            <person name="Osoegawa K."/>
            <person name="Zhu B."/>
            <person name="Rapp A."/>
            <person name="Widaa S."/>
            <person name="Langford C."/>
            <person name="Yang F."/>
            <person name="Schuster S.C."/>
            <person name="Carter N.P."/>
            <person name="Harrow J."/>
            <person name="Ning Z."/>
            <person name="Herrero J."/>
            <person name="Searle S.M."/>
            <person name="Enright A."/>
            <person name="Geisler R."/>
            <person name="Plasterk R.H."/>
            <person name="Lee C."/>
            <person name="Westerfield M."/>
            <person name="de Jong P.J."/>
            <person name="Zon L.I."/>
            <person name="Postlethwait J.H."/>
            <person name="Nusslein-Volhard C."/>
            <person name="Hubbard T.J."/>
            <person name="Roest Crollius H."/>
            <person name="Rogers J."/>
            <person name="Stemple D.L."/>
        </authorList>
    </citation>
    <scope>NUCLEOTIDE SEQUENCE [LARGE SCALE GENOMIC DNA]</scope>
    <source>
        <strain>Tuebingen</strain>
    </source>
</reference>
<reference key="2">
    <citation type="journal article" date="2008" name="J. Proteome Res.">
        <title>Online automated in vivo zebrafish phosphoproteomics: from large-scale analysis down to a single embryo.</title>
        <authorList>
            <person name="Lemeer S."/>
            <person name="Pinkse M.W.H."/>
            <person name="Mohammed S."/>
            <person name="van Breukelen B."/>
            <person name="den Hertog J."/>
            <person name="Slijper M."/>
            <person name="Heck A.J.R."/>
        </authorList>
    </citation>
    <scope>PHOSPHORYLATION [LARGE SCALE ANALYSIS] AT SER-179; SER-356; SER-542 AND SER-569</scope>
    <scope>IDENTIFICATION BY MASS SPECTROMETRY</scope>
    <source>
        <tissue>Embryo</tissue>
    </source>
</reference>
<evidence type="ECO:0000250" key="1"/>
<evidence type="ECO:0000255" key="2">
    <source>
        <dbReference type="PROSITE-ProRule" id="PRU00355"/>
    </source>
</evidence>
<evidence type="ECO:0000255" key="3">
    <source>
        <dbReference type="PROSITE-ProRule" id="PRU00819"/>
    </source>
</evidence>
<evidence type="ECO:0000256" key="4">
    <source>
        <dbReference type="SAM" id="MobiDB-lite"/>
    </source>
</evidence>
<evidence type="ECO:0000269" key="5">
    <source>
    </source>
</evidence>
<feature type="chain" id="PRO_0000295159" description="AT-rich interactive domain-containing protein 3A">
    <location>
        <begin position="1"/>
        <end position="570"/>
    </location>
</feature>
<feature type="domain" description="ARID" evidence="2">
    <location>
        <begin position="232"/>
        <end position="324"/>
    </location>
</feature>
<feature type="domain" description="REKLES" evidence="3">
    <location>
        <begin position="429"/>
        <end position="523"/>
    </location>
</feature>
<feature type="region of interest" description="Disordered" evidence="4">
    <location>
        <begin position="102"/>
        <end position="215"/>
    </location>
</feature>
<feature type="region of interest" description="Important for nuclear localization" evidence="1">
    <location>
        <begin position="430"/>
        <end position="473"/>
    </location>
</feature>
<feature type="region of interest" description="Homodimerization" evidence="1">
    <location>
        <begin position="475"/>
        <end position="495"/>
    </location>
</feature>
<feature type="region of interest" description="Important for cytoplasmic localization" evidence="1">
    <location>
        <begin position="519"/>
        <end position="531"/>
    </location>
</feature>
<feature type="region of interest" description="Disordered" evidence="4">
    <location>
        <begin position="528"/>
        <end position="570"/>
    </location>
</feature>
<feature type="compositionally biased region" description="Acidic residues" evidence="4">
    <location>
        <begin position="120"/>
        <end position="160"/>
    </location>
</feature>
<feature type="compositionally biased region" description="Low complexity" evidence="4">
    <location>
        <begin position="548"/>
        <end position="570"/>
    </location>
</feature>
<feature type="modified residue" description="Phosphoserine" evidence="5">
    <location>
        <position position="179"/>
    </location>
</feature>
<feature type="modified residue" description="Phosphoserine" evidence="5">
    <location>
        <position position="356"/>
    </location>
</feature>
<feature type="modified residue" description="Phosphoserine" evidence="5">
    <location>
        <position position="542"/>
    </location>
</feature>
<feature type="modified residue" description="Phosphoserine" evidence="5">
    <location>
        <position position="569"/>
    </location>
</feature>
<dbReference type="EMBL" id="CR318632">
    <property type="protein sequence ID" value="CAM13141.1"/>
    <property type="molecule type" value="Genomic_DNA"/>
</dbReference>
<dbReference type="EMBL" id="BX005419">
    <property type="protein sequence ID" value="CAM13141.1"/>
    <property type="status" value="JOINED"/>
    <property type="molecule type" value="Genomic_DNA"/>
</dbReference>
<dbReference type="RefSeq" id="NP_001093509.1">
    <property type="nucleotide sequence ID" value="NM_001100039.1"/>
</dbReference>
<dbReference type="SMR" id="A2BEA6"/>
<dbReference type="FunCoup" id="A2BEA6">
    <property type="interactions" value="1158"/>
</dbReference>
<dbReference type="STRING" id="7955.ENSDARP00000088317"/>
<dbReference type="iPTMnet" id="A2BEA6"/>
<dbReference type="PaxDb" id="7955-ENSDARP00000088317"/>
<dbReference type="PeptideAtlas" id="A2BEA6"/>
<dbReference type="Ensembl" id="ENSDART00000097546">
    <property type="protein sequence ID" value="ENSDARP00000088317"/>
    <property type="gene ID" value="ENSDARG00000067729"/>
</dbReference>
<dbReference type="Ensembl" id="ENSDART00000184160">
    <property type="protein sequence ID" value="ENSDARP00000146856"/>
    <property type="gene ID" value="ENSDARG00000114447"/>
</dbReference>
<dbReference type="GeneID" id="569444"/>
<dbReference type="KEGG" id="dre:569444"/>
<dbReference type="AGR" id="ZFIN:ZDB-GENE-060526-12"/>
<dbReference type="CTD" id="138715"/>
<dbReference type="ZFIN" id="ZDB-GENE-060526-12">
    <property type="gene designation" value="arid3c"/>
</dbReference>
<dbReference type="eggNOG" id="KOG2744">
    <property type="taxonomic scope" value="Eukaryota"/>
</dbReference>
<dbReference type="HOGENOM" id="CLU_026952_3_0_1"/>
<dbReference type="InParanoid" id="A2BEA6"/>
<dbReference type="OMA" id="APPPHEW"/>
<dbReference type="OrthoDB" id="10044343at2759"/>
<dbReference type="PhylomeDB" id="A2BEA6"/>
<dbReference type="TreeFam" id="TF320364"/>
<dbReference type="PRO" id="PR:A2BEA6"/>
<dbReference type="Proteomes" id="UP000000437">
    <property type="component" value="Alternate scaffold 5"/>
</dbReference>
<dbReference type="Proteomes" id="UP000000437">
    <property type="component" value="Chromosome 5"/>
</dbReference>
<dbReference type="Bgee" id="ENSDARG00000067729">
    <property type="expression patterns" value="Expressed in retina and 15 other cell types or tissues"/>
</dbReference>
<dbReference type="GO" id="GO:0005737">
    <property type="term" value="C:cytoplasm"/>
    <property type="evidence" value="ECO:0007669"/>
    <property type="project" value="UniProtKB-SubCell"/>
</dbReference>
<dbReference type="GO" id="GO:0005634">
    <property type="term" value="C:nucleus"/>
    <property type="evidence" value="ECO:0000318"/>
    <property type="project" value="GO_Central"/>
</dbReference>
<dbReference type="GO" id="GO:0003677">
    <property type="term" value="F:DNA binding"/>
    <property type="evidence" value="ECO:0000318"/>
    <property type="project" value="GO_Central"/>
</dbReference>
<dbReference type="GO" id="GO:0006357">
    <property type="term" value="P:regulation of transcription by RNA polymerase II"/>
    <property type="evidence" value="ECO:0000318"/>
    <property type="project" value="GO_Central"/>
</dbReference>
<dbReference type="CDD" id="cd16880">
    <property type="entry name" value="ARID_ARID3C"/>
    <property type="match status" value="1"/>
</dbReference>
<dbReference type="FunFam" id="1.10.150.60:FF:000006">
    <property type="entry name" value="AT-rich interactive domain-containing protein 3A"/>
    <property type="match status" value="1"/>
</dbReference>
<dbReference type="Gene3D" id="1.10.150.60">
    <property type="entry name" value="ARID DNA-binding domain"/>
    <property type="match status" value="1"/>
</dbReference>
<dbReference type="InterPro" id="IPR045147">
    <property type="entry name" value="ARI3A/B/C"/>
</dbReference>
<dbReference type="InterPro" id="IPR001606">
    <property type="entry name" value="ARID_dom"/>
</dbReference>
<dbReference type="InterPro" id="IPR036431">
    <property type="entry name" value="ARID_dom_sf"/>
</dbReference>
<dbReference type="InterPro" id="IPR023334">
    <property type="entry name" value="REKLES_domain"/>
</dbReference>
<dbReference type="PANTHER" id="PTHR15348:SF2">
    <property type="entry name" value="AT-RICH INTERACTIVE DOMAIN-CONTAINING PROTEIN 3C"/>
    <property type="match status" value="1"/>
</dbReference>
<dbReference type="PANTHER" id="PTHR15348">
    <property type="entry name" value="AT-RICH INTERACTIVE DOMAIN-CONTAINING PROTEIN ARID DOMAIN- CONTAINING PROTEIN DEAD RINGER PROTEIN B-CELL REGULATOR OF IGH TRANSCRIPTION BRIGHT"/>
    <property type="match status" value="1"/>
</dbReference>
<dbReference type="Pfam" id="PF01388">
    <property type="entry name" value="ARID"/>
    <property type="match status" value="1"/>
</dbReference>
<dbReference type="SMART" id="SM01014">
    <property type="entry name" value="ARID"/>
    <property type="match status" value="1"/>
</dbReference>
<dbReference type="SMART" id="SM00501">
    <property type="entry name" value="BRIGHT"/>
    <property type="match status" value="1"/>
</dbReference>
<dbReference type="SUPFAM" id="SSF46774">
    <property type="entry name" value="ARID-like"/>
    <property type="match status" value="1"/>
</dbReference>
<dbReference type="PROSITE" id="PS51011">
    <property type="entry name" value="ARID"/>
    <property type="match status" value="1"/>
</dbReference>
<dbReference type="PROSITE" id="PS51486">
    <property type="entry name" value="REKLES"/>
    <property type="match status" value="1"/>
</dbReference>
<gene>
    <name type="primary">arid3a</name>
    <name type="ORF">si:ch211-113n10.6</name>
</gene>
<accession>A2BEA6</accession>